<dbReference type="EC" id="6.3.4.21" evidence="1"/>
<dbReference type="EMBL" id="CP000758">
    <property type="protein sequence ID" value="ABS12856.1"/>
    <property type="molecule type" value="Genomic_DNA"/>
</dbReference>
<dbReference type="RefSeq" id="WP_010657961.1">
    <property type="nucleotide sequence ID" value="NC_009667.1"/>
</dbReference>
<dbReference type="SMR" id="A6WV52"/>
<dbReference type="STRING" id="439375.Oant_0125"/>
<dbReference type="GeneID" id="61316349"/>
<dbReference type="KEGG" id="oan:Oant_0125"/>
<dbReference type="eggNOG" id="COG1488">
    <property type="taxonomic scope" value="Bacteria"/>
</dbReference>
<dbReference type="HOGENOM" id="CLU_030991_1_0_5"/>
<dbReference type="PhylomeDB" id="A6WV52"/>
<dbReference type="UniPathway" id="UPA00253">
    <property type="reaction ID" value="UER00457"/>
</dbReference>
<dbReference type="Proteomes" id="UP000002301">
    <property type="component" value="Chromosome 1"/>
</dbReference>
<dbReference type="GO" id="GO:0005829">
    <property type="term" value="C:cytosol"/>
    <property type="evidence" value="ECO:0007669"/>
    <property type="project" value="TreeGrafter"/>
</dbReference>
<dbReference type="GO" id="GO:0004516">
    <property type="term" value="F:nicotinate phosphoribosyltransferase activity"/>
    <property type="evidence" value="ECO:0007669"/>
    <property type="project" value="UniProtKB-UniRule"/>
</dbReference>
<dbReference type="GO" id="GO:0034355">
    <property type="term" value="P:NAD biosynthetic process via the salvage pathway"/>
    <property type="evidence" value="ECO:0007669"/>
    <property type="project" value="TreeGrafter"/>
</dbReference>
<dbReference type="Gene3D" id="3.20.140.10">
    <property type="entry name" value="nicotinate phosphoribosyltransferase"/>
    <property type="match status" value="1"/>
</dbReference>
<dbReference type="HAMAP" id="MF_00570">
    <property type="entry name" value="NAPRTase"/>
    <property type="match status" value="1"/>
</dbReference>
<dbReference type="InterPro" id="IPR041525">
    <property type="entry name" value="N/Namide_PRibTrfase"/>
</dbReference>
<dbReference type="InterPro" id="IPR040727">
    <property type="entry name" value="NAPRTase_N"/>
</dbReference>
<dbReference type="InterPro" id="IPR006406">
    <property type="entry name" value="Nic_PRibTrfase"/>
</dbReference>
<dbReference type="InterPro" id="IPR007229">
    <property type="entry name" value="Nic_PRibTrfase-Fam"/>
</dbReference>
<dbReference type="InterPro" id="IPR036068">
    <property type="entry name" value="Nicotinate_pribotase-like_C"/>
</dbReference>
<dbReference type="NCBIfam" id="TIGR01514">
    <property type="entry name" value="NAPRTase"/>
    <property type="match status" value="1"/>
</dbReference>
<dbReference type="NCBIfam" id="NF003704">
    <property type="entry name" value="PRK05321.1"/>
    <property type="match status" value="1"/>
</dbReference>
<dbReference type="PANTHER" id="PTHR11098">
    <property type="entry name" value="NICOTINATE PHOSPHORIBOSYLTRANSFERASE"/>
    <property type="match status" value="1"/>
</dbReference>
<dbReference type="PANTHER" id="PTHR11098:SF1">
    <property type="entry name" value="NICOTINATE PHOSPHORIBOSYLTRANSFERASE"/>
    <property type="match status" value="1"/>
</dbReference>
<dbReference type="Pfam" id="PF04095">
    <property type="entry name" value="NAPRTase"/>
    <property type="match status" value="1"/>
</dbReference>
<dbReference type="Pfam" id="PF17767">
    <property type="entry name" value="NAPRTase_N"/>
    <property type="match status" value="1"/>
</dbReference>
<dbReference type="PIRSF" id="PIRSF000484">
    <property type="entry name" value="NAPRT"/>
    <property type="match status" value="1"/>
</dbReference>
<dbReference type="SUPFAM" id="SSF51690">
    <property type="entry name" value="Nicotinate/Quinolinate PRTase C-terminal domain-like"/>
    <property type="match status" value="1"/>
</dbReference>
<dbReference type="SUPFAM" id="SSF54675">
    <property type="entry name" value="Nicotinate/Quinolinate PRTase N-terminal domain-like"/>
    <property type="match status" value="1"/>
</dbReference>
<name>PNCB_BRUA4</name>
<feature type="chain" id="PRO_1000025003" description="Nicotinate phosphoribosyltransferase">
    <location>
        <begin position="1"/>
        <end position="434"/>
    </location>
</feature>
<feature type="modified residue" description="Phosphohistidine; by autocatalysis" evidence="1">
    <location>
        <position position="242"/>
    </location>
</feature>
<accession>A6WV52</accession>
<evidence type="ECO:0000255" key="1">
    <source>
        <dbReference type="HAMAP-Rule" id="MF_00570"/>
    </source>
</evidence>
<sequence length="434" mass="49921">MAKTDIARRVYNHAWKLDPIVRSLLDTDFYKLLMLQMIWGLYPKVDATFSLINRTTSVRLADEIDEGELRAQLDHARTLRFSKKEMIWLAGNSFYGRKQIFQPEFLNWLHDFQLPEYDLRRKDGQYELHFHGPWSHTTMWEIPALAIINELRSRAAMKNLGPFSLDVLYARAKAKMWSKVERLRQLPGLKISDFGTRRRHSFLWQRWCVEALKEGIGDAFTGTSNVLLAMDTDLEALGTNAHELPMVLAALAKNDEELRSAPYRVLQDWNRYYGGNLLIVLPDAFGTAAFLRNAPDWVADWTGFRPDSAPPIEGGERIIEWWKSRGKDPREKLLIFSDALDVDTIEETYRHFEGRVRMSFGWGTNLTNDFAGCAPKEIEGLNAISLVCKVTDANGHPAVKLSDNPQKATGDPKEVARYLKFFGNEERVEQLVRV</sequence>
<reference key="1">
    <citation type="journal article" date="2011" name="J. Bacteriol.">
        <title>Genome of Ochrobactrum anthropi ATCC 49188 T, a versatile opportunistic pathogen and symbiont of several eukaryotic hosts.</title>
        <authorList>
            <person name="Chain P.S."/>
            <person name="Lang D.M."/>
            <person name="Comerci D.J."/>
            <person name="Malfatti S.A."/>
            <person name="Vergez L.M."/>
            <person name="Shin M."/>
            <person name="Ugalde R.A."/>
            <person name="Garcia E."/>
            <person name="Tolmasky M.E."/>
        </authorList>
    </citation>
    <scope>NUCLEOTIDE SEQUENCE [LARGE SCALE GENOMIC DNA]</scope>
    <source>
        <strain>ATCC 49188 / DSM 6882 / CCUG 24695 / JCM 21032 / LMG 3331 / NBRC 15819 / NCTC 12168 / Alc 37</strain>
    </source>
</reference>
<gene>
    <name evidence="1" type="primary">pncB</name>
    <name type="ordered locus">Oant_0125</name>
</gene>
<protein>
    <recommendedName>
        <fullName evidence="1">Nicotinate phosphoribosyltransferase</fullName>
        <shortName evidence="1">NAPRTase</shortName>
        <ecNumber evidence="1">6.3.4.21</ecNumber>
    </recommendedName>
</protein>
<comment type="function">
    <text evidence="1">Catalyzes the synthesis of beta-nicotinate D-ribonucleotide from nicotinate and 5-phospho-D-ribose 1-phosphate at the expense of ATP.</text>
</comment>
<comment type="catalytic activity">
    <reaction evidence="1">
        <text>nicotinate + 5-phospho-alpha-D-ribose 1-diphosphate + ATP + H2O = nicotinate beta-D-ribonucleotide + ADP + phosphate + diphosphate</text>
        <dbReference type="Rhea" id="RHEA:36163"/>
        <dbReference type="ChEBI" id="CHEBI:15377"/>
        <dbReference type="ChEBI" id="CHEBI:30616"/>
        <dbReference type="ChEBI" id="CHEBI:32544"/>
        <dbReference type="ChEBI" id="CHEBI:33019"/>
        <dbReference type="ChEBI" id="CHEBI:43474"/>
        <dbReference type="ChEBI" id="CHEBI:57502"/>
        <dbReference type="ChEBI" id="CHEBI:58017"/>
        <dbReference type="ChEBI" id="CHEBI:456216"/>
        <dbReference type="EC" id="6.3.4.21"/>
    </reaction>
</comment>
<comment type="pathway">
    <text evidence="1">Cofactor biosynthesis; NAD(+) biosynthesis; nicotinate D-ribonucleotide from nicotinate: step 1/1.</text>
</comment>
<comment type="PTM">
    <text evidence="1">Transiently phosphorylated on a His residue during the reaction cycle. Phosphorylation strongly increases the affinity for substrates and increases the rate of nicotinate D-ribonucleotide production. Dephosphorylation regenerates the low-affinity form of the enzyme, leading to product release.</text>
</comment>
<comment type="similarity">
    <text evidence="1">Belongs to the NAPRTase family.</text>
</comment>
<organism>
    <name type="scientific">Brucella anthropi (strain ATCC 49188 / DSM 6882 / CCUG 24695 / JCM 21032 / LMG 3331 / NBRC 15819 / NCTC 12168 / Alc 37)</name>
    <name type="common">Ochrobactrum anthropi</name>
    <dbReference type="NCBI Taxonomy" id="439375"/>
    <lineage>
        <taxon>Bacteria</taxon>
        <taxon>Pseudomonadati</taxon>
        <taxon>Pseudomonadota</taxon>
        <taxon>Alphaproteobacteria</taxon>
        <taxon>Hyphomicrobiales</taxon>
        <taxon>Brucellaceae</taxon>
        <taxon>Brucella/Ochrobactrum group</taxon>
        <taxon>Brucella</taxon>
    </lineage>
</organism>
<proteinExistence type="inferred from homology"/>
<keyword id="KW-0436">Ligase</keyword>
<keyword id="KW-0597">Phosphoprotein</keyword>
<keyword id="KW-0662">Pyridine nucleotide biosynthesis</keyword>
<keyword id="KW-1185">Reference proteome</keyword>